<accession>Q8Y601</accession>
<protein>
    <recommendedName>
        <fullName evidence="1">3-methyl-2-oxobutanoate hydroxymethyltransferase</fullName>
        <ecNumber evidence="1">2.1.2.11</ecNumber>
    </recommendedName>
    <alternativeName>
        <fullName evidence="1">Ketopantoate hydroxymethyltransferase</fullName>
        <shortName evidence="1">KPHMT</shortName>
    </alternativeName>
</protein>
<keyword id="KW-0963">Cytoplasm</keyword>
<keyword id="KW-0460">Magnesium</keyword>
<keyword id="KW-0479">Metal-binding</keyword>
<keyword id="KW-0566">Pantothenate biosynthesis</keyword>
<keyword id="KW-1185">Reference proteome</keyword>
<keyword id="KW-0808">Transferase</keyword>
<gene>
    <name evidence="1" type="primary">panB</name>
    <name type="ordered locus">lmo1902</name>
</gene>
<proteinExistence type="inferred from homology"/>
<reference key="1">
    <citation type="journal article" date="2001" name="Science">
        <title>Comparative genomics of Listeria species.</title>
        <authorList>
            <person name="Glaser P."/>
            <person name="Frangeul L."/>
            <person name="Buchrieser C."/>
            <person name="Rusniok C."/>
            <person name="Amend A."/>
            <person name="Baquero F."/>
            <person name="Berche P."/>
            <person name="Bloecker H."/>
            <person name="Brandt P."/>
            <person name="Chakraborty T."/>
            <person name="Charbit A."/>
            <person name="Chetouani F."/>
            <person name="Couve E."/>
            <person name="de Daruvar A."/>
            <person name="Dehoux P."/>
            <person name="Domann E."/>
            <person name="Dominguez-Bernal G."/>
            <person name="Duchaud E."/>
            <person name="Durant L."/>
            <person name="Dussurget O."/>
            <person name="Entian K.-D."/>
            <person name="Fsihi H."/>
            <person name="Garcia-del Portillo F."/>
            <person name="Garrido P."/>
            <person name="Gautier L."/>
            <person name="Goebel W."/>
            <person name="Gomez-Lopez N."/>
            <person name="Hain T."/>
            <person name="Hauf J."/>
            <person name="Jackson D."/>
            <person name="Jones L.-M."/>
            <person name="Kaerst U."/>
            <person name="Kreft J."/>
            <person name="Kuhn M."/>
            <person name="Kunst F."/>
            <person name="Kurapkat G."/>
            <person name="Madueno E."/>
            <person name="Maitournam A."/>
            <person name="Mata Vicente J."/>
            <person name="Ng E."/>
            <person name="Nedjari H."/>
            <person name="Nordsiek G."/>
            <person name="Novella S."/>
            <person name="de Pablos B."/>
            <person name="Perez-Diaz J.-C."/>
            <person name="Purcell R."/>
            <person name="Remmel B."/>
            <person name="Rose M."/>
            <person name="Schlueter T."/>
            <person name="Simoes N."/>
            <person name="Tierrez A."/>
            <person name="Vazquez-Boland J.-A."/>
            <person name="Voss H."/>
            <person name="Wehland J."/>
            <person name="Cossart P."/>
        </authorList>
    </citation>
    <scope>NUCLEOTIDE SEQUENCE [LARGE SCALE GENOMIC DNA]</scope>
    <source>
        <strain>ATCC BAA-679 / EGD-e</strain>
    </source>
</reference>
<name>PANB_LISMO</name>
<comment type="function">
    <text evidence="1">Catalyzes the reversible reaction in which hydroxymethyl group from 5,10-methylenetetrahydrofolate is transferred onto alpha-ketoisovalerate to form ketopantoate.</text>
</comment>
<comment type="catalytic activity">
    <reaction evidence="1">
        <text>3-methyl-2-oxobutanoate + (6R)-5,10-methylene-5,6,7,8-tetrahydrofolate + H2O = 2-dehydropantoate + (6S)-5,6,7,8-tetrahydrofolate</text>
        <dbReference type="Rhea" id="RHEA:11824"/>
        <dbReference type="ChEBI" id="CHEBI:11561"/>
        <dbReference type="ChEBI" id="CHEBI:11851"/>
        <dbReference type="ChEBI" id="CHEBI:15377"/>
        <dbReference type="ChEBI" id="CHEBI:15636"/>
        <dbReference type="ChEBI" id="CHEBI:57453"/>
        <dbReference type="EC" id="2.1.2.11"/>
    </reaction>
</comment>
<comment type="cofactor">
    <cofactor evidence="1">
        <name>Mg(2+)</name>
        <dbReference type="ChEBI" id="CHEBI:18420"/>
    </cofactor>
    <text evidence="1">Binds 1 Mg(2+) ion per subunit.</text>
</comment>
<comment type="pathway">
    <text evidence="1">Cofactor biosynthesis; (R)-pantothenate biosynthesis; (R)-pantoate from 3-methyl-2-oxobutanoate: step 1/2.</text>
</comment>
<comment type="subunit">
    <text evidence="1">Homodecamer; pentamer of dimers.</text>
</comment>
<comment type="subcellular location">
    <subcellularLocation>
        <location evidence="1">Cytoplasm</location>
    </subcellularLocation>
</comment>
<comment type="similarity">
    <text evidence="1">Belongs to the PanB family.</text>
</comment>
<dbReference type="EC" id="2.1.2.11" evidence="1"/>
<dbReference type="EMBL" id="AL591981">
    <property type="protein sequence ID" value="CAC99980.1"/>
    <property type="molecule type" value="Genomic_DNA"/>
</dbReference>
<dbReference type="PIR" id="AF1312">
    <property type="entry name" value="AF1312"/>
</dbReference>
<dbReference type="RefSeq" id="NP_465426.1">
    <property type="nucleotide sequence ID" value="NC_003210.1"/>
</dbReference>
<dbReference type="RefSeq" id="WP_003723012.1">
    <property type="nucleotide sequence ID" value="NZ_CP149495.1"/>
</dbReference>
<dbReference type="SMR" id="Q8Y601"/>
<dbReference type="STRING" id="169963.gene:17594587"/>
<dbReference type="PaxDb" id="169963-lmo1902"/>
<dbReference type="EnsemblBacteria" id="CAC99980">
    <property type="protein sequence ID" value="CAC99980"/>
    <property type="gene ID" value="CAC99980"/>
</dbReference>
<dbReference type="GeneID" id="985786"/>
<dbReference type="KEGG" id="lmo:lmo1902"/>
<dbReference type="PATRIC" id="fig|169963.11.peg.1948"/>
<dbReference type="eggNOG" id="COG0413">
    <property type="taxonomic scope" value="Bacteria"/>
</dbReference>
<dbReference type="HOGENOM" id="CLU_036645_1_0_9"/>
<dbReference type="OrthoDB" id="9781789at2"/>
<dbReference type="PhylomeDB" id="Q8Y601"/>
<dbReference type="BioCyc" id="LMON169963:LMO1902-MONOMER"/>
<dbReference type="UniPathway" id="UPA00028">
    <property type="reaction ID" value="UER00003"/>
</dbReference>
<dbReference type="Proteomes" id="UP000000817">
    <property type="component" value="Chromosome"/>
</dbReference>
<dbReference type="GO" id="GO:0005737">
    <property type="term" value="C:cytoplasm"/>
    <property type="evidence" value="ECO:0000318"/>
    <property type="project" value="GO_Central"/>
</dbReference>
<dbReference type="GO" id="GO:0003864">
    <property type="term" value="F:3-methyl-2-oxobutanoate hydroxymethyltransferase activity"/>
    <property type="evidence" value="ECO:0000318"/>
    <property type="project" value="GO_Central"/>
</dbReference>
<dbReference type="GO" id="GO:0000287">
    <property type="term" value="F:magnesium ion binding"/>
    <property type="evidence" value="ECO:0000318"/>
    <property type="project" value="GO_Central"/>
</dbReference>
<dbReference type="GO" id="GO:0015940">
    <property type="term" value="P:pantothenate biosynthetic process"/>
    <property type="evidence" value="ECO:0000318"/>
    <property type="project" value="GO_Central"/>
</dbReference>
<dbReference type="CDD" id="cd06557">
    <property type="entry name" value="KPHMT-like"/>
    <property type="match status" value="1"/>
</dbReference>
<dbReference type="FunFam" id="3.20.20.60:FF:000003">
    <property type="entry name" value="3-methyl-2-oxobutanoate hydroxymethyltransferase"/>
    <property type="match status" value="1"/>
</dbReference>
<dbReference type="Gene3D" id="3.20.20.60">
    <property type="entry name" value="Phosphoenolpyruvate-binding domains"/>
    <property type="match status" value="1"/>
</dbReference>
<dbReference type="HAMAP" id="MF_00156">
    <property type="entry name" value="PanB"/>
    <property type="match status" value="1"/>
</dbReference>
<dbReference type="InterPro" id="IPR003700">
    <property type="entry name" value="Pantoate_hydroxy_MeTrfase"/>
</dbReference>
<dbReference type="InterPro" id="IPR015813">
    <property type="entry name" value="Pyrv/PenolPyrv_kinase-like_dom"/>
</dbReference>
<dbReference type="InterPro" id="IPR040442">
    <property type="entry name" value="Pyrv_kinase-like_dom_sf"/>
</dbReference>
<dbReference type="NCBIfam" id="TIGR00222">
    <property type="entry name" value="panB"/>
    <property type="match status" value="1"/>
</dbReference>
<dbReference type="NCBIfam" id="NF001452">
    <property type="entry name" value="PRK00311.1"/>
    <property type="match status" value="1"/>
</dbReference>
<dbReference type="PANTHER" id="PTHR20881">
    <property type="entry name" value="3-METHYL-2-OXOBUTANOATE HYDROXYMETHYLTRANSFERASE"/>
    <property type="match status" value="1"/>
</dbReference>
<dbReference type="PANTHER" id="PTHR20881:SF0">
    <property type="entry name" value="3-METHYL-2-OXOBUTANOATE HYDROXYMETHYLTRANSFERASE"/>
    <property type="match status" value="1"/>
</dbReference>
<dbReference type="Pfam" id="PF02548">
    <property type="entry name" value="Pantoate_transf"/>
    <property type="match status" value="1"/>
</dbReference>
<dbReference type="PIRSF" id="PIRSF000388">
    <property type="entry name" value="Pantoate_hydroxy_MeTrfase"/>
    <property type="match status" value="1"/>
</dbReference>
<dbReference type="SUPFAM" id="SSF51621">
    <property type="entry name" value="Phosphoenolpyruvate/pyruvate domain"/>
    <property type="match status" value="1"/>
</dbReference>
<organism>
    <name type="scientific">Listeria monocytogenes serovar 1/2a (strain ATCC BAA-679 / EGD-e)</name>
    <dbReference type="NCBI Taxonomy" id="169963"/>
    <lineage>
        <taxon>Bacteria</taxon>
        <taxon>Bacillati</taxon>
        <taxon>Bacillota</taxon>
        <taxon>Bacilli</taxon>
        <taxon>Bacillales</taxon>
        <taxon>Listeriaceae</taxon>
        <taxon>Listeria</taxon>
    </lineage>
</organism>
<evidence type="ECO:0000255" key="1">
    <source>
        <dbReference type="HAMAP-Rule" id="MF_00156"/>
    </source>
</evidence>
<sequence>MKRPVDFFAMKENGEKITMITAYDYPSAKNVEQAEADMILVGDSLGMVVLGYDSTVPVTIDDMIHHTKAVKRGATDTFIVTDMPFMTYHGSVNETIQNARKIIQESGAHAVKLEGAGEVVNKIARLTEAGAPVVAHLGLTPQSVGLTGSYKVRAKSAQEAQELMDNALAVEAAGAIAIVLEAIPRQLAEKVSKALSIPTIGIGAGLETDGQVLVYHDIIGYGISRRAKFVKAYADIDETIEPALASYVKEVKAETFPEVKHSFTMAEEDLKGLYGRE</sequence>
<feature type="chain" id="PRO_0000184859" description="3-methyl-2-oxobutanoate hydroxymethyltransferase">
    <location>
        <begin position="1"/>
        <end position="277"/>
    </location>
</feature>
<feature type="active site" description="Proton acceptor" evidence="1">
    <location>
        <position position="181"/>
    </location>
</feature>
<feature type="binding site" evidence="1">
    <location>
        <begin position="43"/>
        <end position="44"/>
    </location>
    <ligand>
        <name>3-methyl-2-oxobutanoate</name>
        <dbReference type="ChEBI" id="CHEBI:11851"/>
    </ligand>
</feature>
<feature type="binding site" evidence="1">
    <location>
        <position position="43"/>
    </location>
    <ligand>
        <name>Mg(2+)</name>
        <dbReference type="ChEBI" id="CHEBI:18420"/>
    </ligand>
</feature>
<feature type="binding site" evidence="1">
    <location>
        <position position="82"/>
    </location>
    <ligand>
        <name>3-methyl-2-oxobutanoate</name>
        <dbReference type="ChEBI" id="CHEBI:11851"/>
    </ligand>
</feature>
<feature type="binding site" evidence="1">
    <location>
        <position position="82"/>
    </location>
    <ligand>
        <name>Mg(2+)</name>
        <dbReference type="ChEBI" id="CHEBI:18420"/>
    </ligand>
</feature>
<feature type="binding site" evidence="1">
    <location>
        <position position="112"/>
    </location>
    <ligand>
        <name>3-methyl-2-oxobutanoate</name>
        <dbReference type="ChEBI" id="CHEBI:11851"/>
    </ligand>
</feature>
<feature type="binding site" evidence="1">
    <location>
        <position position="114"/>
    </location>
    <ligand>
        <name>Mg(2+)</name>
        <dbReference type="ChEBI" id="CHEBI:18420"/>
    </ligand>
</feature>